<name>PGK_BDEBA</name>
<comment type="catalytic activity">
    <reaction evidence="1">
        <text>(2R)-3-phosphoglycerate + ATP = (2R)-3-phospho-glyceroyl phosphate + ADP</text>
        <dbReference type="Rhea" id="RHEA:14801"/>
        <dbReference type="ChEBI" id="CHEBI:30616"/>
        <dbReference type="ChEBI" id="CHEBI:57604"/>
        <dbReference type="ChEBI" id="CHEBI:58272"/>
        <dbReference type="ChEBI" id="CHEBI:456216"/>
        <dbReference type="EC" id="2.7.2.3"/>
    </reaction>
</comment>
<comment type="pathway">
    <text evidence="1">Carbohydrate degradation; glycolysis; pyruvate from D-glyceraldehyde 3-phosphate: step 2/5.</text>
</comment>
<comment type="subunit">
    <text evidence="1">Monomer.</text>
</comment>
<comment type="subcellular location">
    <subcellularLocation>
        <location evidence="1">Cytoplasm</location>
    </subcellularLocation>
</comment>
<comment type="similarity">
    <text evidence="1">Belongs to the phosphoglycerate kinase family.</text>
</comment>
<accession>P62410</accession>
<sequence length="401" mass="43356">MANGLKGIKTVRDFELAGKVVFLRLDLNVPMENGKITDENRITASLPTIKYCMEQGAKLVMASHLGRPKTKDDTEFSLEPVAKRLQDLLNAEVILVEEPDSDAPKHLLPSLKPHQLILLENVRFEEGETKDSVEFAQKIANYSDIYINDAFGASHRAHATIHALPSVMKDKGIGFLIEKEITMLDSLLQNPKRPYIAVMGGAKVSDKIAVIERLMDVVDGFIVGGAMAYTFLKAQGLPVGKSLVENDKLKYAKEMIERIEARNKTILLPVDHVATKGITDTAHAHVTNDVAIAEDELGVDIGPKSIKNFSAALREAGTIFWNGPMGIFENPAFAKGTFGVAQAIADSEAIKIVGGGDSAAAAEASGFAGKMTHISTGGGASLEYLQGDKLPGLEILRTRIR</sequence>
<dbReference type="EC" id="2.7.2.3" evidence="1"/>
<dbReference type="EMBL" id="BX842648">
    <property type="protein sequence ID" value="CAE78979.1"/>
    <property type="molecule type" value="Genomic_DNA"/>
</dbReference>
<dbReference type="RefSeq" id="WP_011163581.1">
    <property type="nucleotide sequence ID" value="NC_005363.1"/>
</dbReference>
<dbReference type="SMR" id="P62410"/>
<dbReference type="STRING" id="264462.Bd1050"/>
<dbReference type="GeneID" id="93012109"/>
<dbReference type="KEGG" id="bba:Bd1050"/>
<dbReference type="eggNOG" id="COG0126">
    <property type="taxonomic scope" value="Bacteria"/>
</dbReference>
<dbReference type="HOGENOM" id="CLU_025427_0_2_7"/>
<dbReference type="UniPathway" id="UPA00109">
    <property type="reaction ID" value="UER00185"/>
</dbReference>
<dbReference type="Proteomes" id="UP000008080">
    <property type="component" value="Chromosome"/>
</dbReference>
<dbReference type="GO" id="GO:0005829">
    <property type="term" value="C:cytosol"/>
    <property type="evidence" value="ECO:0007669"/>
    <property type="project" value="TreeGrafter"/>
</dbReference>
<dbReference type="GO" id="GO:0043531">
    <property type="term" value="F:ADP binding"/>
    <property type="evidence" value="ECO:0007669"/>
    <property type="project" value="TreeGrafter"/>
</dbReference>
<dbReference type="GO" id="GO:0005524">
    <property type="term" value="F:ATP binding"/>
    <property type="evidence" value="ECO:0007669"/>
    <property type="project" value="UniProtKB-KW"/>
</dbReference>
<dbReference type="GO" id="GO:0004618">
    <property type="term" value="F:phosphoglycerate kinase activity"/>
    <property type="evidence" value="ECO:0007669"/>
    <property type="project" value="UniProtKB-UniRule"/>
</dbReference>
<dbReference type="GO" id="GO:0006094">
    <property type="term" value="P:gluconeogenesis"/>
    <property type="evidence" value="ECO:0007669"/>
    <property type="project" value="TreeGrafter"/>
</dbReference>
<dbReference type="GO" id="GO:0006096">
    <property type="term" value="P:glycolytic process"/>
    <property type="evidence" value="ECO:0007669"/>
    <property type="project" value="UniProtKB-UniRule"/>
</dbReference>
<dbReference type="FunFam" id="3.40.50.1260:FF:000006">
    <property type="entry name" value="Phosphoglycerate kinase"/>
    <property type="match status" value="1"/>
</dbReference>
<dbReference type="FunFam" id="3.40.50.1260:FF:000031">
    <property type="entry name" value="Phosphoglycerate kinase 1"/>
    <property type="match status" value="1"/>
</dbReference>
<dbReference type="Gene3D" id="3.40.50.1260">
    <property type="entry name" value="Phosphoglycerate kinase, N-terminal domain"/>
    <property type="match status" value="2"/>
</dbReference>
<dbReference type="HAMAP" id="MF_00145">
    <property type="entry name" value="Phosphoglyc_kinase"/>
    <property type="match status" value="1"/>
</dbReference>
<dbReference type="InterPro" id="IPR001576">
    <property type="entry name" value="Phosphoglycerate_kinase"/>
</dbReference>
<dbReference type="InterPro" id="IPR015911">
    <property type="entry name" value="Phosphoglycerate_kinase_CS"/>
</dbReference>
<dbReference type="InterPro" id="IPR015824">
    <property type="entry name" value="Phosphoglycerate_kinase_N"/>
</dbReference>
<dbReference type="InterPro" id="IPR036043">
    <property type="entry name" value="Phosphoglycerate_kinase_sf"/>
</dbReference>
<dbReference type="PANTHER" id="PTHR11406">
    <property type="entry name" value="PHOSPHOGLYCERATE KINASE"/>
    <property type="match status" value="1"/>
</dbReference>
<dbReference type="PANTHER" id="PTHR11406:SF23">
    <property type="entry name" value="PHOSPHOGLYCERATE KINASE 1, CHLOROPLASTIC-RELATED"/>
    <property type="match status" value="1"/>
</dbReference>
<dbReference type="Pfam" id="PF00162">
    <property type="entry name" value="PGK"/>
    <property type="match status" value="1"/>
</dbReference>
<dbReference type="PIRSF" id="PIRSF000724">
    <property type="entry name" value="Pgk"/>
    <property type="match status" value="1"/>
</dbReference>
<dbReference type="PRINTS" id="PR00477">
    <property type="entry name" value="PHGLYCKINASE"/>
</dbReference>
<dbReference type="SUPFAM" id="SSF53748">
    <property type="entry name" value="Phosphoglycerate kinase"/>
    <property type="match status" value="1"/>
</dbReference>
<dbReference type="PROSITE" id="PS00111">
    <property type="entry name" value="PGLYCERATE_KINASE"/>
    <property type="match status" value="1"/>
</dbReference>
<reference key="1">
    <citation type="journal article" date="2004" name="Science">
        <title>A predator unmasked: life cycle of Bdellovibrio bacteriovorus from a genomic perspective.</title>
        <authorList>
            <person name="Rendulic S."/>
            <person name="Jagtap P."/>
            <person name="Rosinus A."/>
            <person name="Eppinger M."/>
            <person name="Baar C."/>
            <person name="Lanz C."/>
            <person name="Keller H."/>
            <person name="Lambert C."/>
            <person name="Evans K.J."/>
            <person name="Goesmann A."/>
            <person name="Meyer F."/>
            <person name="Sockett R.E."/>
            <person name="Schuster S.C."/>
        </authorList>
    </citation>
    <scope>NUCLEOTIDE SEQUENCE [LARGE SCALE GENOMIC DNA]</scope>
    <source>
        <strain>ATCC 15356 / DSM 50701 / NCIMB 9529 / HD100</strain>
    </source>
</reference>
<organism>
    <name type="scientific">Bdellovibrio bacteriovorus (strain ATCC 15356 / DSM 50701 / NCIMB 9529 / HD100)</name>
    <dbReference type="NCBI Taxonomy" id="264462"/>
    <lineage>
        <taxon>Bacteria</taxon>
        <taxon>Pseudomonadati</taxon>
        <taxon>Bdellovibrionota</taxon>
        <taxon>Bdellovibrionia</taxon>
        <taxon>Bdellovibrionales</taxon>
        <taxon>Pseudobdellovibrionaceae</taxon>
        <taxon>Bdellovibrio</taxon>
    </lineage>
</organism>
<gene>
    <name evidence="1" type="primary">pgk</name>
    <name type="ordered locus">Bd1050</name>
</gene>
<evidence type="ECO:0000255" key="1">
    <source>
        <dbReference type="HAMAP-Rule" id="MF_00145"/>
    </source>
</evidence>
<protein>
    <recommendedName>
        <fullName evidence="1">Phosphoglycerate kinase</fullName>
        <ecNumber evidence="1">2.7.2.3</ecNumber>
    </recommendedName>
</protein>
<keyword id="KW-0067">ATP-binding</keyword>
<keyword id="KW-0963">Cytoplasm</keyword>
<keyword id="KW-0324">Glycolysis</keyword>
<keyword id="KW-0418">Kinase</keyword>
<keyword id="KW-0547">Nucleotide-binding</keyword>
<keyword id="KW-1185">Reference proteome</keyword>
<keyword id="KW-0808">Transferase</keyword>
<proteinExistence type="inferred from homology"/>
<feature type="chain" id="PRO_0000145908" description="Phosphoglycerate kinase">
    <location>
        <begin position="1"/>
        <end position="401"/>
    </location>
</feature>
<feature type="binding site" evidence="1">
    <location>
        <begin position="26"/>
        <end position="28"/>
    </location>
    <ligand>
        <name>substrate</name>
    </ligand>
</feature>
<feature type="binding site" evidence="1">
    <location>
        <position position="41"/>
    </location>
    <ligand>
        <name>substrate</name>
    </ligand>
</feature>
<feature type="binding site" evidence="1">
    <location>
        <begin position="64"/>
        <end position="67"/>
    </location>
    <ligand>
        <name>substrate</name>
    </ligand>
</feature>
<feature type="binding site" evidence="1">
    <location>
        <position position="123"/>
    </location>
    <ligand>
        <name>substrate</name>
    </ligand>
</feature>
<feature type="binding site" evidence="1">
    <location>
        <position position="156"/>
    </location>
    <ligand>
        <name>substrate</name>
    </ligand>
</feature>
<feature type="binding site" evidence="1">
    <location>
        <position position="207"/>
    </location>
    <ligand>
        <name>ATP</name>
        <dbReference type="ChEBI" id="CHEBI:30616"/>
    </ligand>
</feature>
<feature type="binding site" evidence="1">
    <location>
        <position position="298"/>
    </location>
    <ligand>
        <name>ATP</name>
        <dbReference type="ChEBI" id="CHEBI:30616"/>
    </ligand>
</feature>
<feature type="binding site" evidence="1">
    <location>
        <position position="329"/>
    </location>
    <ligand>
        <name>ATP</name>
        <dbReference type="ChEBI" id="CHEBI:30616"/>
    </ligand>
</feature>
<feature type="binding site" evidence="1">
    <location>
        <begin position="355"/>
        <end position="358"/>
    </location>
    <ligand>
        <name>ATP</name>
        <dbReference type="ChEBI" id="CHEBI:30616"/>
    </ligand>
</feature>